<comment type="function">
    <text evidence="1 2 3">Required for KRAS signaling regulation and modulation of cell proliferation (PubMed:31406347). Regulator of KRAS prenylation, and probably prenylation of other small GTPases (By similarity). Required for lymphocyte development and function (By similarity). Not required for myeloid cell development (By similarity).</text>
</comment>
<comment type="subunit">
    <text evidence="2">Homodimer.</text>
</comment>
<comment type="similarity">
    <text evidence="4">Belongs to the small GTPase superfamily. Rab family.</text>
</comment>
<name>RABL3_DANRE</name>
<feature type="chain" id="PRO_0000312169" description="Rab-like protein 3">
    <location>
        <begin position="1"/>
        <end position="233"/>
    </location>
</feature>
<feature type="region of interest" description="Small GTPase-like">
    <location>
        <begin position="1"/>
        <end position="233"/>
    </location>
</feature>
<feature type="binding site" evidence="2">
    <location>
        <begin position="16"/>
        <end position="21"/>
    </location>
    <ligand>
        <name>GTP</name>
        <dbReference type="ChEBI" id="CHEBI:37565"/>
    </ligand>
</feature>
<feature type="binding site" evidence="2">
    <location>
        <begin position="148"/>
        <end position="150"/>
    </location>
    <ligand>
        <name>GTP</name>
        <dbReference type="ChEBI" id="CHEBI:37565"/>
    </ligand>
</feature>
<feature type="binding site" evidence="2">
    <location>
        <begin position="179"/>
        <end position="180"/>
    </location>
    <ligand>
        <name>GTP</name>
        <dbReference type="ChEBI" id="CHEBI:37565"/>
    </ligand>
</feature>
<accession>Q6TNS7</accession>
<evidence type="ECO:0000250" key="1">
    <source>
        <dbReference type="UniProtKB" id="Q5HYI8"/>
    </source>
</evidence>
<evidence type="ECO:0000250" key="2">
    <source>
        <dbReference type="UniProtKB" id="Q9D4V7"/>
    </source>
</evidence>
<evidence type="ECO:0000269" key="3">
    <source>
    </source>
</evidence>
<evidence type="ECO:0000305" key="4"/>
<sequence length="233" mass="26113">MASLDRVKVLVLGDSGVGKSSLVHLLCQNQVLGNPSWTVGCSVDVRVHDYREGTPEEKAFYIELWDVGGSVGSASSVKSTRAVFYNSVNGIILVHDLTNKKSSQNLYRWSLEALSKDSSPTGIIVSNGDYDREQFAENAVPLLLIGTKFDQIPENKRNDVLTRTAFLSEDFNAEEINLDCTNPRYLAAGSSNAVKLSRFFDKVIEKRYFTRDPSQMQSFTDRRRFNFKSLHSD</sequence>
<gene>
    <name type="primary">rabl3</name>
    <name type="ORF">zgc:100876</name>
</gene>
<protein>
    <recommendedName>
        <fullName>Rab-like protein 3</fullName>
    </recommendedName>
</protein>
<keyword id="KW-0342">GTP-binding</keyword>
<keyword id="KW-0547">Nucleotide-binding</keyword>
<keyword id="KW-1185">Reference proteome</keyword>
<proteinExistence type="evidence at transcript level"/>
<reference key="1">
    <citation type="journal article" date="2004" name="Proc. Natl. Acad. Sci. U.S.A.">
        <title>Hematopoietic gene expression profile in zebrafish kidney marrow.</title>
        <authorList>
            <person name="Song H.-D."/>
            <person name="Sun X.-J."/>
            <person name="Deng M."/>
            <person name="Zhang G.-W."/>
            <person name="Zhou Y."/>
            <person name="Wu X.-Y."/>
            <person name="Sheng Y."/>
            <person name="Chen Y."/>
            <person name="Ruan Z."/>
            <person name="Jiang C.-L."/>
            <person name="Fan H.-Y."/>
            <person name="Zon L.I."/>
            <person name="Kanki J.P."/>
            <person name="Liu T.X."/>
            <person name="Look A.T."/>
            <person name="Chen Z."/>
        </authorList>
    </citation>
    <scope>NUCLEOTIDE SEQUENCE [LARGE SCALE MRNA]</scope>
    <source>
        <tissue>Kidney marrow</tissue>
    </source>
</reference>
<reference key="2">
    <citation type="submission" date="2004-07" db="EMBL/GenBank/DDBJ databases">
        <authorList>
            <consortium name="NIH - Zebrafish Gene Collection (ZGC) project"/>
        </authorList>
    </citation>
    <scope>NUCLEOTIDE SEQUENCE [LARGE SCALE MRNA]</scope>
</reference>
<reference key="3">
    <citation type="journal article" date="2019" name="Nat. Genet.">
        <title>Mutations in RABL3 alter KRAS prenylation and are associated with hereditary pancreatic cancer.</title>
        <authorList>
            <person name="Nissim S."/>
            <person name="Leshchiner I."/>
            <person name="Mancias J.D."/>
            <person name="Greenblatt M.B."/>
            <person name="Maertens O."/>
            <person name="Cassa C.A."/>
            <person name="Rosenfeld J.A."/>
            <person name="Cox A.G."/>
            <person name="Hedgepeth J."/>
            <person name="Wucherpfennig J.I."/>
            <person name="Kim A.J."/>
            <person name="Henderson J.E."/>
            <person name="Gonyo P."/>
            <person name="Brandt A."/>
            <person name="Lorimer E."/>
            <person name="Unger B."/>
            <person name="Prokop J.W."/>
            <person name="Heidel J.R."/>
            <person name="Wang X.X."/>
            <person name="Ukaegbu C.I."/>
            <person name="Jennings B.C."/>
            <person name="Paulo J.A."/>
            <person name="Gableske S."/>
            <person name="Fierke C.A."/>
            <person name="Getz G."/>
            <person name="Sunyaev S.R."/>
            <person name="Wade Harper J."/>
            <person name="Cichowski K."/>
            <person name="Kimmelman A.C."/>
            <person name="Houvras Y."/>
            <person name="Syngal S."/>
            <person name="Williams C."/>
            <person name="Goessling W."/>
        </authorList>
    </citation>
    <scope>FUNCTION</scope>
</reference>
<organism>
    <name type="scientific">Danio rerio</name>
    <name type="common">Zebrafish</name>
    <name type="synonym">Brachydanio rerio</name>
    <dbReference type="NCBI Taxonomy" id="7955"/>
    <lineage>
        <taxon>Eukaryota</taxon>
        <taxon>Metazoa</taxon>
        <taxon>Chordata</taxon>
        <taxon>Craniata</taxon>
        <taxon>Vertebrata</taxon>
        <taxon>Euteleostomi</taxon>
        <taxon>Actinopterygii</taxon>
        <taxon>Neopterygii</taxon>
        <taxon>Teleostei</taxon>
        <taxon>Ostariophysi</taxon>
        <taxon>Cypriniformes</taxon>
        <taxon>Danionidae</taxon>
        <taxon>Danioninae</taxon>
        <taxon>Danio</taxon>
    </lineage>
</organism>
<dbReference type="EMBL" id="AY391440">
    <property type="protein sequence ID" value="AAQ91252.1"/>
    <property type="molecule type" value="mRNA"/>
</dbReference>
<dbReference type="EMBL" id="BC078191">
    <property type="protein sequence ID" value="AAH78191.1"/>
    <property type="molecule type" value="mRNA"/>
</dbReference>
<dbReference type="RefSeq" id="NP_991296.1">
    <property type="nucleotide sequence ID" value="NM_205733.1"/>
</dbReference>
<dbReference type="SMR" id="Q6TNS7"/>
<dbReference type="FunCoup" id="Q6TNS7">
    <property type="interactions" value="908"/>
</dbReference>
<dbReference type="STRING" id="7955.ENSDARP00000115081"/>
<dbReference type="PaxDb" id="7955-ENSDARP00000115081"/>
<dbReference type="DNASU" id="403048"/>
<dbReference type="Ensembl" id="ENSDART00000136136">
    <property type="protein sequence ID" value="ENSDARP00000115081"/>
    <property type="gene ID" value="ENSDARG00000040959"/>
</dbReference>
<dbReference type="Ensembl" id="ENSDART00000172033">
    <property type="protein sequence ID" value="ENSDARP00000133137"/>
    <property type="gene ID" value="ENSDARG00000040959"/>
</dbReference>
<dbReference type="GeneID" id="403048"/>
<dbReference type="KEGG" id="dre:403048"/>
<dbReference type="AGR" id="ZFIN:ZDB-GENE-040808-11"/>
<dbReference type="CTD" id="285282"/>
<dbReference type="ZFIN" id="ZDB-GENE-040808-11">
    <property type="gene designation" value="rabl3"/>
</dbReference>
<dbReference type="eggNOG" id="ENOG502QT3S">
    <property type="taxonomic scope" value="Eukaryota"/>
</dbReference>
<dbReference type="HOGENOM" id="CLU_084875_1_0_1"/>
<dbReference type="InParanoid" id="Q6TNS7"/>
<dbReference type="OMA" id="THLICQQ"/>
<dbReference type="OrthoDB" id="5914890at2759"/>
<dbReference type="PhylomeDB" id="Q6TNS7"/>
<dbReference type="PRO" id="PR:Q6TNS7"/>
<dbReference type="Proteomes" id="UP000000437">
    <property type="component" value="Chromosome 9"/>
</dbReference>
<dbReference type="Bgee" id="ENSDARG00000040959">
    <property type="expression patterns" value="Expressed in testis and 28 other cell types or tissues"/>
</dbReference>
<dbReference type="ExpressionAtlas" id="Q6TNS7">
    <property type="expression patterns" value="baseline"/>
</dbReference>
<dbReference type="GO" id="GO:0012505">
    <property type="term" value="C:endomembrane system"/>
    <property type="evidence" value="ECO:0000318"/>
    <property type="project" value="GO_Central"/>
</dbReference>
<dbReference type="GO" id="GO:0005525">
    <property type="term" value="F:GTP binding"/>
    <property type="evidence" value="ECO:0000250"/>
    <property type="project" value="UniProtKB"/>
</dbReference>
<dbReference type="GO" id="GO:0003924">
    <property type="term" value="F:GTPase activity"/>
    <property type="evidence" value="ECO:0000318"/>
    <property type="project" value="GO_Central"/>
</dbReference>
<dbReference type="GO" id="GO:0042803">
    <property type="term" value="F:protein homodimerization activity"/>
    <property type="evidence" value="ECO:0000250"/>
    <property type="project" value="UniProtKB"/>
</dbReference>
<dbReference type="GO" id="GO:0030183">
    <property type="term" value="P:B cell differentiation"/>
    <property type="evidence" value="ECO:0000250"/>
    <property type="project" value="UniProtKB"/>
</dbReference>
<dbReference type="GO" id="GO:0006886">
    <property type="term" value="P:intracellular protein transport"/>
    <property type="evidence" value="ECO:0000318"/>
    <property type="project" value="GO_Central"/>
</dbReference>
<dbReference type="GO" id="GO:0001779">
    <property type="term" value="P:natural killer cell differentiation"/>
    <property type="evidence" value="ECO:0000250"/>
    <property type="project" value="UniProtKB"/>
</dbReference>
<dbReference type="GO" id="GO:1903059">
    <property type="term" value="P:regulation of protein lipidation"/>
    <property type="evidence" value="ECO:0000250"/>
    <property type="project" value="UniProtKB"/>
</dbReference>
<dbReference type="GO" id="GO:0046578">
    <property type="term" value="P:regulation of Ras protein signal transduction"/>
    <property type="evidence" value="ECO:0000250"/>
    <property type="project" value="UniProtKB"/>
</dbReference>
<dbReference type="GO" id="GO:0033077">
    <property type="term" value="P:T cell differentiation in thymus"/>
    <property type="evidence" value="ECO:0000250"/>
    <property type="project" value="UniProtKB"/>
</dbReference>
<dbReference type="CDD" id="cd04102">
    <property type="entry name" value="RabL3"/>
    <property type="match status" value="1"/>
</dbReference>
<dbReference type="FunFam" id="3.40.50.300:FF:000525">
    <property type="entry name" value="rab-like protein 3 isoform X1"/>
    <property type="match status" value="1"/>
</dbReference>
<dbReference type="Gene3D" id="3.40.50.300">
    <property type="entry name" value="P-loop containing nucleotide triphosphate hydrolases"/>
    <property type="match status" value="1"/>
</dbReference>
<dbReference type="InterPro" id="IPR027417">
    <property type="entry name" value="P-loop_NTPase"/>
</dbReference>
<dbReference type="PANTHER" id="PTHR24073">
    <property type="entry name" value="DRAB5-RELATED"/>
    <property type="match status" value="1"/>
</dbReference>
<dbReference type="Pfam" id="PF08477">
    <property type="entry name" value="Roc"/>
    <property type="match status" value="1"/>
</dbReference>
<dbReference type="PRINTS" id="PR00449">
    <property type="entry name" value="RASTRNSFRMNG"/>
</dbReference>
<dbReference type="SMART" id="SM00175">
    <property type="entry name" value="RAB"/>
    <property type="match status" value="1"/>
</dbReference>
<dbReference type="SUPFAM" id="SSF52540">
    <property type="entry name" value="P-loop containing nucleoside triphosphate hydrolases"/>
    <property type="match status" value="1"/>
</dbReference>
<dbReference type="PROSITE" id="PS51419">
    <property type="entry name" value="RAB"/>
    <property type="match status" value="1"/>
</dbReference>